<sequence>MSDIEARVRKIIAEQLGVEESQVTNEKAFVADLGADSLDSVELVMALEDEFGIEIPDEDAEKITTVQSAIDYANTHQKA</sequence>
<dbReference type="EMBL" id="CP000542">
    <property type="protein sequence ID" value="ABM58979.1"/>
    <property type="molecule type" value="Genomic_DNA"/>
</dbReference>
<dbReference type="RefSeq" id="WP_011810971.1">
    <property type="nucleotide sequence ID" value="NC_008786.1"/>
</dbReference>
<dbReference type="SMR" id="A1WMX2"/>
<dbReference type="STRING" id="391735.Veis_3249"/>
<dbReference type="GeneID" id="76461698"/>
<dbReference type="KEGG" id="vei:Veis_3249"/>
<dbReference type="eggNOG" id="COG0236">
    <property type="taxonomic scope" value="Bacteria"/>
</dbReference>
<dbReference type="HOGENOM" id="CLU_108696_5_1_4"/>
<dbReference type="OrthoDB" id="9804551at2"/>
<dbReference type="UniPathway" id="UPA00094"/>
<dbReference type="Proteomes" id="UP000000374">
    <property type="component" value="Chromosome"/>
</dbReference>
<dbReference type="GO" id="GO:0005829">
    <property type="term" value="C:cytosol"/>
    <property type="evidence" value="ECO:0007669"/>
    <property type="project" value="TreeGrafter"/>
</dbReference>
<dbReference type="GO" id="GO:0016020">
    <property type="term" value="C:membrane"/>
    <property type="evidence" value="ECO:0007669"/>
    <property type="project" value="GOC"/>
</dbReference>
<dbReference type="GO" id="GO:0000035">
    <property type="term" value="F:acyl binding"/>
    <property type="evidence" value="ECO:0007669"/>
    <property type="project" value="TreeGrafter"/>
</dbReference>
<dbReference type="GO" id="GO:0000036">
    <property type="term" value="F:acyl carrier activity"/>
    <property type="evidence" value="ECO:0007669"/>
    <property type="project" value="UniProtKB-UniRule"/>
</dbReference>
<dbReference type="GO" id="GO:0031177">
    <property type="term" value="F:phosphopantetheine binding"/>
    <property type="evidence" value="ECO:0007669"/>
    <property type="project" value="InterPro"/>
</dbReference>
<dbReference type="GO" id="GO:0009245">
    <property type="term" value="P:lipid A biosynthetic process"/>
    <property type="evidence" value="ECO:0007669"/>
    <property type="project" value="TreeGrafter"/>
</dbReference>
<dbReference type="FunFam" id="1.10.1200.10:FF:000001">
    <property type="entry name" value="Acyl carrier protein"/>
    <property type="match status" value="1"/>
</dbReference>
<dbReference type="Gene3D" id="1.10.1200.10">
    <property type="entry name" value="ACP-like"/>
    <property type="match status" value="1"/>
</dbReference>
<dbReference type="HAMAP" id="MF_01217">
    <property type="entry name" value="Acyl_carrier"/>
    <property type="match status" value="1"/>
</dbReference>
<dbReference type="InterPro" id="IPR003231">
    <property type="entry name" value="ACP"/>
</dbReference>
<dbReference type="InterPro" id="IPR036736">
    <property type="entry name" value="ACP-like_sf"/>
</dbReference>
<dbReference type="InterPro" id="IPR020806">
    <property type="entry name" value="PKS_PP-bd"/>
</dbReference>
<dbReference type="InterPro" id="IPR009081">
    <property type="entry name" value="PP-bd_ACP"/>
</dbReference>
<dbReference type="InterPro" id="IPR006162">
    <property type="entry name" value="Ppantetheine_attach_site"/>
</dbReference>
<dbReference type="NCBIfam" id="TIGR00517">
    <property type="entry name" value="acyl_carrier"/>
    <property type="match status" value="1"/>
</dbReference>
<dbReference type="NCBIfam" id="NF002148">
    <property type="entry name" value="PRK00982.1-2"/>
    <property type="match status" value="1"/>
</dbReference>
<dbReference type="NCBIfam" id="NF002149">
    <property type="entry name" value="PRK00982.1-3"/>
    <property type="match status" value="1"/>
</dbReference>
<dbReference type="NCBIfam" id="NF002150">
    <property type="entry name" value="PRK00982.1-4"/>
    <property type="match status" value="1"/>
</dbReference>
<dbReference type="NCBIfam" id="NF002151">
    <property type="entry name" value="PRK00982.1-5"/>
    <property type="match status" value="1"/>
</dbReference>
<dbReference type="PANTHER" id="PTHR20863">
    <property type="entry name" value="ACYL CARRIER PROTEIN"/>
    <property type="match status" value="1"/>
</dbReference>
<dbReference type="PANTHER" id="PTHR20863:SF76">
    <property type="entry name" value="CARRIER DOMAIN-CONTAINING PROTEIN"/>
    <property type="match status" value="1"/>
</dbReference>
<dbReference type="Pfam" id="PF00550">
    <property type="entry name" value="PP-binding"/>
    <property type="match status" value="1"/>
</dbReference>
<dbReference type="SMART" id="SM00823">
    <property type="entry name" value="PKS_PP"/>
    <property type="match status" value="1"/>
</dbReference>
<dbReference type="SUPFAM" id="SSF47336">
    <property type="entry name" value="ACP-like"/>
    <property type="match status" value="1"/>
</dbReference>
<dbReference type="PROSITE" id="PS50075">
    <property type="entry name" value="CARRIER"/>
    <property type="match status" value="1"/>
</dbReference>
<dbReference type="PROSITE" id="PS00012">
    <property type="entry name" value="PHOSPHOPANTETHEINE"/>
    <property type="match status" value="1"/>
</dbReference>
<name>ACP_VEREI</name>
<organism>
    <name type="scientific">Verminephrobacter eiseniae (strain EF01-2)</name>
    <dbReference type="NCBI Taxonomy" id="391735"/>
    <lineage>
        <taxon>Bacteria</taxon>
        <taxon>Pseudomonadati</taxon>
        <taxon>Pseudomonadota</taxon>
        <taxon>Betaproteobacteria</taxon>
        <taxon>Burkholderiales</taxon>
        <taxon>Comamonadaceae</taxon>
        <taxon>Verminephrobacter</taxon>
    </lineage>
</organism>
<evidence type="ECO:0000255" key="1">
    <source>
        <dbReference type="HAMAP-Rule" id="MF_01217"/>
    </source>
</evidence>
<evidence type="ECO:0000255" key="2">
    <source>
        <dbReference type="PROSITE-ProRule" id="PRU00258"/>
    </source>
</evidence>
<reference key="1">
    <citation type="submission" date="2006-12" db="EMBL/GenBank/DDBJ databases">
        <title>Complete sequence of chromosome 1 of Verminephrobacter eiseniae EF01-2.</title>
        <authorList>
            <person name="Copeland A."/>
            <person name="Lucas S."/>
            <person name="Lapidus A."/>
            <person name="Barry K."/>
            <person name="Detter J.C."/>
            <person name="Glavina del Rio T."/>
            <person name="Dalin E."/>
            <person name="Tice H."/>
            <person name="Pitluck S."/>
            <person name="Chertkov O."/>
            <person name="Brettin T."/>
            <person name="Bruce D."/>
            <person name="Han C."/>
            <person name="Tapia R."/>
            <person name="Gilna P."/>
            <person name="Schmutz J."/>
            <person name="Larimer F."/>
            <person name="Land M."/>
            <person name="Hauser L."/>
            <person name="Kyrpides N."/>
            <person name="Kim E."/>
            <person name="Stahl D."/>
            <person name="Richardson P."/>
        </authorList>
    </citation>
    <scope>NUCLEOTIDE SEQUENCE [LARGE SCALE GENOMIC DNA]</scope>
    <source>
        <strain>EF01-2</strain>
    </source>
</reference>
<accession>A1WMX2</accession>
<gene>
    <name evidence="1" type="primary">acpP</name>
    <name type="ordered locus">Veis_3249</name>
</gene>
<comment type="function">
    <text evidence="1">Carrier of the growing fatty acid chain in fatty acid biosynthesis.</text>
</comment>
<comment type="pathway">
    <text evidence="1">Lipid metabolism; fatty acid biosynthesis.</text>
</comment>
<comment type="subcellular location">
    <subcellularLocation>
        <location evidence="1">Cytoplasm</location>
    </subcellularLocation>
</comment>
<comment type="PTM">
    <text evidence="1">4'-phosphopantetheine is transferred from CoA to a specific serine of apo-ACP by AcpS. This modification is essential for activity because fatty acids are bound in thioester linkage to the sulfhydryl of the prosthetic group.</text>
</comment>
<comment type="similarity">
    <text evidence="1">Belongs to the acyl carrier protein (ACP) family.</text>
</comment>
<feature type="chain" id="PRO_1000066715" description="Acyl carrier protein">
    <location>
        <begin position="1"/>
        <end position="79"/>
    </location>
</feature>
<feature type="domain" description="Carrier" evidence="2">
    <location>
        <begin position="2"/>
        <end position="77"/>
    </location>
</feature>
<feature type="modified residue" description="O-(pantetheine 4'-phosphoryl)serine" evidence="2">
    <location>
        <position position="37"/>
    </location>
</feature>
<keyword id="KW-0963">Cytoplasm</keyword>
<keyword id="KW-0275">Fatty acid biosynthesis</keyword>
<keyword id="KW-0276">Fatty acid metabolism</keyword>
<keyword id="KW-0444">Lipid biosynthesis</keyword>
<keyword id="KW-0443">Lipid metabolism</keyword>
<keyword id="KW-0596">Phosphopantetheine</keyword>
<keyword id="KW-0597">Phosphoprotein</keyword>
<keyword id="KW-1185">Reference proteome</keyword>
<proteinExistence type="inferred from homology"/>
<protein>
    <recommendedName>
        <fullName evidence="1">Acyl carrier protein</fullName>
        <shortName evidence="1">ACP</shortName>
    </recommendedName>
</protein>